<reference key="1">
    <citation type="journal article" date="2008" name="J. Bacteriol.">
        <title>The complete genome sequence of Escherichia coli DH10B: insights into the biology of a laboratory workhorse.</title>
        <authorList>
            <person name="Durfee T."/>
            <person name="Nelson R."/>
            <person name="Baldwin S."/>
            <person name="Plunkett G. III"/>
            <person name="Burland V."/>
            <person name="Mau B."/>
            <person name="Petrosino J.F."/>
            <person name="Qin X."/>
            <person name="Muzny D.M."/>
            <person name="Ayele M."/>
            <person name="Gibbs R.A."/>
            <person name="Csorgo B."/>
            <person name="Posfai G."/>
            <person name="Weinstock G.M."/>
            <person name="Blattner F.R."/>
        </authorList>
    </citation>
    <scope>NUCLEOTIDE SEQUENCE [LARGE SCALE GENOMIC DNA]</scope>
    <source>
        <strain>K12 / DH10B</strain>
    </source>
</reference>
<gene>
    <name evidence="1" type="primary">pheS</name>
    <name type="ordered locus">ECDH10B_1850</name>
</gene>
<comment type="catalytic activity">
    <reaction evidence="1">
        <text>tRNA(Phe) + L-phenylalanine + ATP = L-phenylalanyl-tRNA(Phe) + AMP + diphosphate + H(+)</text>
        <dbReference type="Rhea" id="RHEA:19413"/>
        <dbReference type="Rhea" id="RHEA-COMP:9668"/>
        <dbReference type="Rhea" id="RHEA-COMP:9699"/>
        <dbReference type="ChEBI" id="CHEBI:15378"/>
        <dbReference type="ChEBI" id="CHEBI:30616"/>
        <dbReference type="ChEBI" id="CHEBI:33019"/>
        <dbReference type="ChEBI" id="CHEBI:58095"/>
        <dbReference type="ChEBI" id="CHEBI:78442"/>
        <dbReference type="ChEBI" id="CHEBI:78531"/>
        <dbReference type="ChEBI" id="CHEBI:456215"/>
        <dbReference type="EC" id="6.1.1.20"/>
    </reaction>
</comment>
<comment type="cofactor">
    <cofactor evidence="1">
        <name>Mg(2+)</name>
        <dbReference type="ChEBI" id="CHEBI:18420"/>
    </cofactor>
    <text evidence="1">Binds 2 magnesium ions per tetramer.</text>
</comment>
<comment type="subunit">
    <text evidence="1">Tetramer of two alpha and two beta subunits.</text>
</comment>
<comment type="subcellular location">
    <subcellularLocation>
        <location evidence="1">Cytoplasm</location>
    </subcellularLocation>
</comment>
<comment type="similarity">
    <text evidence="1">Belongs to the class-II aminoacyl-tRNA synthetase family. Phe-tRNA synthetase alpha subunit type 1 subfamily.</text>
</comment>
<proteinExistence type="inferred from homology"/>
<name>SYFA_ECODH</name>
<accession>B1XG21</accession>
<evidence type="ECO:0000255" key="1">
    <source>
        <dbReference type="HAMAP-Rule" id="MF_00281"/>
    </source>
</evidence>
<sequence length="327" mass="36832">MSHLAELVASAKAAISQASDVAALDNVRVEYLGKKGHLTLQMTTLRELPPEERPAAGAVINEAKEQVQQALNARKAELESAALNARLAAETIDVSLPGRRIENGGLHPVTRTIDRIESFFGELGFTVATGPEIEDDYHNFDALNIPGHHPARADHDTFWFDTTRLLRTQTSGVQIRTMKAQQPPIRIIAPGRVYRNDYDQTHTPMFHQMEGLIVDTNISFTNLKGTLHDFLRNFFEEDLQIRFRPSYFPFTEPSAEVDVMGKNGKWLEVLGCGMVHPNVLRNVGIDPEVYSGFAFGMGMERLTMLRYGVTDLRSFFENDLRFLKQFK</sequence>
<protein>
    <recommendedName>
        <fullName evidence="1">Phenylalanine--tRNA ligase alpha subunit</fullName>
        <ecNumber evidence="1">6.1.1.20</ecNumber>
    </recommendedName>
    <alternativeName>
        <fullName evidence="1">Phenylalanyl-tRNA synthetase alpha subunit</fullName>
        <shortName evidence="1">PheRS</shortName>
    </alternativeName>
</protein>
<keyword id="KW-0030">Aminoacyl-tRNA synthetase</keyword>
<keyword id="KW-0067">ATP-binding</keyword>
<keyword id="KW-0963">Cytoplasm</keyword>
<keyword id="KW-0436">Ligase</keyword>
<keyword id="KW-0460">Magnesium</keyword>
<keyword id="KW-0479">Metal-binding</keyword>
<keyword id="KW-0547">Nucleotide-binding</keyword>
<keyword id="KW-0648">Protein biosynthesis</keyword>
<feature type="chain" id="PRO_1000114870" description="Phenylalanine--tRNA ligase alpha subunit">
    <location>
        <begin position="1"/>
        <end position="327"/>
    </location>
</feature>
<feature type="binding site" evidence="1">
    <location>
        <position position="252"/>
    </location>
    <ligand>
        <name>Mg(2+)</name>
        <dbReference type="ChEBI" id="CHEBI:18420"/>
        <note>shared with beta subunit</note>
    </ligand>
</feature>
<dbReference type="EC" id="6.1.1.20" evidence="1"/>
<dbReference type="EMBL" id="CP000948">
    <property type="protein sequence ID" value="ACB02915.1"/>
    <property type="molecule type" value="Genomic_DNA"/>
</dbReference>
<dbReference type="RefSeq" id="WP_000018596.1">
    <property type="nucleotide sequence ID" value="NC_010473.1"/>
</dbReference>
<dbReference type="SMR" id="B1XG21"/>
<dbReference type="GeneID" id="75205640"/>
<dbReference type="KEGG" id="ecd:ECDH10B_1850"/>
<dbReference type="HOGENOM" id="CLU_025086_0_1_6"/>
<dbReference type="GO" id="GO:0005737">
    <property type="term" value="C:cytoplasm"/>
    <property type="evidence" value="ECO:0007669"/>
    <property type="project" value="UniProtKB-SubCell"/>
</dbReference>
<dbReference type="GO" id="GO:0005524">
    <property type="term" value="F:ATP binding"/>
    <property type="evidence" value="ECO:0007669"/>
    <property type="project" value="UniProtKB-UniRule"/>
</dbReference>
<dbReference type="GO" id="GO:0000287">
    <property type="term" value="F:magnesium ion binding"/>
    <property type="evidence" value="ECO:0007669"/>
    <property type="project" value="UniProtKB-UniRule"/>
</dbReference>
<dbReference type="GO" id="GO:0004826">
    <property type="term" value="F:phenylalanine-tRNA ligase activity"/>
    <property type="evidence" value="ECO:0007669"/>
    <property type="project" value="UniProtKB-UniRule"/>
</dbReference>
<dbReference type="GO" id="GO:0000049">
    <property type="term" value="F:tRNA binding"/>
    <property type="evidence" value="ECO:0007669"/>
    <property type="project" value="InterPro"/>
</dbReference>
<dbReference type="GO" id="GO:0006432">
    <property type="term" value="P:phenylalanyl-tRNA aminoacylation"/>
    <property type="evidence" value="ECO:0007669"/>
    <property type="project" value="UniProtKB-UniRule"/>
</dbReference>
<dbReference type="CDD" id="cd00496">
    <property type="entry name" value="PheRS_alpha_core"/>
    <property type="match status" value="1"/>
</dbReference>
<dbReference type="FunFam" id="3.30.930.10:FF:000003">
    <property type="entry name" value="Phenylalanine--tRNA ligase alpha subunit"/>
    <property type="match status" value="1"/>
</dbReference>
<dbReference type="Gene3D" id="3.30.930.10">
    <property type="entry name" value="Bira Bifunctional Protein, Domain 2"/>
    <property type="match status" value="1"/>
</dbReference>
<dbReference type="HAMAP" id="MF_00281">
    <property type="entry name" value="Phe_tRNA_synth_alpha1"/>
    <property type="match status" value="1"/>
</dbReference>
<dbReference type="InterPro" id="IPR006195">
    <property type="entry name" value="aa-tRNA-synth_II"/>
</dbReference>
<dbReference type="InterPro" id="IPR045864">
    <property type="entry name" value="aa-tRNA-synth_II/BPL/LPL"/>
</dbReference>
<dbReference type="InterPro" id="IPR004529">
    <property type="entry name" value="Phe-tRNA-synth_IIc_asu"/>
</dbReference>
<dbReference type="InterPro" id="IPR004188">
    <property type="entry name" value="Phe-tRNA_ligase_II_N"/>
</dbReference>
<dbReference type="InterPro" id="IPR022911">
    <property type="entry name" value="Phe_tRNA_ligase_alpha1_bac"/>
</dbReference>
<dbReference type="InterPro" id="IPR002319">
    <property type="entry name" value="Phenylalanyl-tRNA_Synthase"/>
</dbReference>
<dbReference type="InterPro" id="IPR010978">
    <property type="entry name" value="tRNA-bd_arm"/>
</dbReference>
<dbReference type="NCBIfam" id="TIGR00468">
    <property type="entry name" value="pheS"/>
    <property type="match status" value="1"/>
</dbReference>
<dbReference type="PANTHER" id="PTHR11538:SF41">
    <property type="entry name" value="PHENYLALANINE--TRNA LIGASE, MITOCHONDRIAL"/>
    <property type="match status" value="1"/>
</dbReference>
<dbReference type="PANTHER" id="PTHR11538">
    <property type="entry name" value="PHENYLALANYL-TRNA SYNTHETASE"/>
    <property type="match status" value="1"/>
</dbReference>
<dbReference type="Pfam" id="PF02912">
    <property type="entry name" value="Phe_tRNA-synt_N"/>
    <property type="match status" value="1"/>
</dbReference>
<dbReference type="Pfam" id="PF01409">
    <property type="entry name" value="tRNA-synt_2d"/>
    <property type="match status" value="1"/>
</dbReference>
<dbReference type="SUPFAM" id="SSF55681">
    <property type="entry name" value="Class II aaRS and biotin synthetases"/>
    <property type="match status" value="1"/>
</dbReference>
<dbReference type="SUPFAM" id="SSF46589">
    <property type="entry name" value="tRNA-binding arm"/>
    <property type="match status" value="1"/>
</dbReference>
<dbReference type="PROSITE" id="PS50862">
    <property type="entry name" value="AA_TRNA_LIGASE_II"/>
    <property type="match status" value="1"/>
</dbReference>
<organism>
    <name type="scientific">Escherichia coli (strain K12 / DH10B)</name>
    <dbReference type="NCBI Taxonomy" id="316385"/>
    <lineage>
        <taxon>Bacteria</taxon>
        <taxon>Pseudomonadati</taxon>
        <taxon>Pseudomonadota</taxon>
        <taxon>Gammaproteobacteria</taxon>
        <taxon>Enterobacterales</taxon>
        <taxon>Enterobacteriaceae</taxon>
        <taxon>Escherichia</taxon>
    </lineage>
</organism>